<name>PLD_RICBR</name>
<reference key="1">
    <citation type="journal article" date="2006" name="PLoS Genet.">
        <title>Genome sequence of Rickettsia bellii illuminates the role of amoebae in gene exchanges between intracellular pathogens.</title>
        <authorList>
            <person name="Ogata H."/>
            <person name="La Scola B."/>
            <person name="Audic S."/>
            <person name="Renesto P."/>
            <person name="Blanc G."/>
            <person name="Robert C."/>
            <person name="Fournier P.-E."/>
            <person name="Claverie J.-M."/>
            <person name="Raoult D."/>
        </authorList>
    </citation>
    <scope>NUCLEOTIDE SEQUENCE [LARGE SCALE GENOMIC DNA]</scope>
    <source>
        <strain>RML369-C</strain>
    </source>
</reference>
<sequence>MKRKNKKFTEIFIAFILGIAIGVLGYSDYGTDLINQFKISHTPPPKIKHYNISQLSRSKVSTCFTPPSGCTKFIADQIDTARESIYMHAYGMSDSLITAALIDAQARGVQVKILLDRSNLKQKFSKLHELQRAKIEVGIDKVPGIAHNKVIIIDKKKVITGSFNFTAAADKRNAENVIVIEDAELADSYLQNWLSRKARNG</sequence>
<organism>
    <name type="scientific">Rickettsia bellii (strain RML369-C)</name>
    <dbReference type="NCBI Taxonomy" id="336407"/>
    <lineage>
        <taxon>Bacteria</taxon>
        <taxon>Pseudomonadati</taxon>
        <taxon>Pseudomonadota</taxon>
        <taxon>Alphaproteobacteria</taxon>
        <taxon>Rickettsiales</taxon>
        <taxon>Rickettsiaceae</taxon>
        <taxon>Rickettsieae</taxon>
        <taxon>Rickettsia</taxon>
        <taxon>belli group</taxon>
    </lineage>
</organism>
<feature type="signal peptide" evidence="2">
    <location>
        <begin position="1"/>
        <end position="25"/>
    </location>
</feature>
<feature type="chain" id="PRO_0000274782" description="Phospholipase D">
    <location>
        <begin position="26"/>
        <end position="201"/>
    </location>
</feature>
<feature type="domain" description="PLD phosphodiesterase" evidence="3">
    <location>
        <begin position="142"/>
        <end position="169"/>
    </location>
</feature>
<feature type="active site" evidence="3">
    <location>
        <position position="147"/>
    </location>
</feature>
<feature type="active site" evidence="3">
    <location>
        <position position="149"/>
    </location>
</feature>
<feature type="active site" evidence="3">
    <location>
        <position position="154"/>
    </location>
</feature>
<dbReference type="EC" id="3.1.4.4"/>
<dbReference type="EMBL" id="CP000087">
    <property type="protein sequence ID" value="ABE04256.1"/>
    <property type="molecule type" value="Genomic_DNA"/>
</dbReference>
<dbReference type="RefSeq" id="WP_011476870.1">
    <property type="nucleotide sequence ID" value="NC_007940.1"/>
</dbReference>
<dbReference type="SMR" id="Q1RK58"/>
<dbReference type="KEGG" id="rbe:RBE_0175"/>
<dbReference type="eggNOG" id="COG1502">
    <property type="taxonomic scope" value="Bacteria"/>
</dbReference>
<dbReference type="HOGENOM" id="CLU_080814_3_0_5"/>
<dbReference type="OrthoDB" id="9762009at2"/>
<dbReference type="Proteomes" id="UP000001951">
    <property type="component" value="Chromosome"/>
</dbReference>
<dbReference type="GO" id="GO:0005576">
    <property type="term" value="C:extracellular region"/>
    <property type="evidence" value="ECO:0007669"/>
    <property type="project" value="UniProtKB-SubCell"/>
</dbReference>
<dbReference type="GO" id="GO:0004630">
    <property type="term" value="F:phospholipase D activity"/>
    <property type="evidence" value="ECO:0007669"/>
    <property type="project" value="UniProtKB-EC"/>
</dbReference>
<dbReference type="GO" id="GO:0016891">
    <property type="term" value="F:RNA endonuclease activity, producing 5'-phosphomonoesters"/>
    <property type="evidence" value="ECO:0007669"/>
    <property type="project" value="TreeGrafter"/>
</dbReference>
<dbReference type="GO" id="GO:0016042">
    <property type="term" value="P:lipid catabolic process"/>
    <property type="evidence" value="ECO:0007669"/>
    <property type="project" value="UniProtKB-KW"/>
</dbReference>
<dbReference type="GO" id="GO:0006793">
    <property type="term" value="P:phosphorus metabolic process"/>
    <property type="evidence" value="ECO:0007669"/>
    <property type="project" value="UniProtKB-ARBA"/>
</dbReference>
<dbReference type="CDD" id="cd09170">
    <property type="entry name" value="PLDc_Nuc"/>
    <property type="match status" value="1"/>
</dbReference>
<dbReference type="Gene3D" id="3.30.870.10">
    <property type="entry name" value="Endonuclease Chain A"/>
    <property type="match status" value="1"/>
</dbReference>
<dbReference type="InterPro" id="IPR025202">
    <property type="entry name" value="PLD-like_dom"/>
</dbReference>
<dbReference type="InterPro" id="IPR051406">
    <property type="entry name" value="PLD_domain"/>
</dbReference>
<dbReference type="InterPro" id="IPR001736">
    <property type="entry name" value="PLipase_D/transphosphatidylase"/>
</dbReference>
<dbReference type="PANTHER" id="PTHR43856">
    <property type="entry name" value="CARDIOLIPIN HYDROLASE"/>
    <property type="match status" value="1"/>
</dbReference>
<dbReference type="PANTHER" id="PTHR43856:SF1">
    <property type="entry name" value="MITOCHONDRIAL CARDIOLIPIN HYDROLASE"/>
    <property type="match status" value="1"/>
</dbReference>
<dbReference type="Pfam" id="PF13091">
    <property type="entry name" value="PLDc_2"/>
    <property type="match status" value="1"/>
</dbReference>
<dbReference type="SMART" id="SM00155">
    <property type="entry name" value="PLDc"/>
    <property type="match status" value="1"/>
</dbReference>
<dbReference type="SUPFAM" id="SSF56024">
    <property type="entry name" value="Phospholipase D/nuclease"/>
    <property type="match status" value="1"/>
</dbReference>
<dbReference type="PROSITE" id="PS50035">
    <property type="entry name" value="PLD"/>
    <property type="match status" value="1"/>
</dbReference>
<accession>Q1RK58</accession>
<proteinExistence type="inferred from homology"/>
<protein>
    <recommendedName>
        <fullName>Phospholipase D</fullName>
        <shortName>PLD</shortName>
        <ecNumber>3.1.4.4</ecNumber>
    </recommendedName>
    <alternativeName>
        <fullName>Choline phosphatase</fullName>
    </alternativeName>
</protein>
<evidence type="ECO:0000250" key="1"/>
<evidence type="ECO:0000255" key="2"/>
<evidence type="ECO:0000255" key="3">
    <source>
        <dbReference type="PROSITE-ProRule" id="PRU00153"/>
    </source>
</evidence>
<evidence type="ECO:0000305" key="4"/>
<comment type="function">
    <text evidence="1">Could be a virulence factor.</text>
</comment>
<comment type="catalytic activity">
    <reaction>
        <text>a 1,2-diacyl-sn-glycero-3-phosphocholine + H2O = a 1,2-diacyl-sn-glycero-3-phosphate + choline + H(+)</text>
        <dbReference type="Rhea" id="RHEA:14445"/>
        <dbReference type="ChEBI" id="CHEBI:15354"/>
        <dbReference type="ChEBI" id="CHEBI:15377"/>
        <dbReference type="ChEBI" id="CHEBI:15378"/>
        <dbReference type="ChEBI" id="CHEBI:57643"/>
        <dbReference type="ChEBI" id="CHEBI:58608"/>
        <dbReference type="EC" id="3.1.4.4"/>
    </reaction>
</comment>
<comment type="subunit">
    <text evidence="1">Homodimer.</text>
</comment>
<comment type="subcellular location">
    <subcellularLocation>
        <location evidence="4">Secreted</location>
    </subcellularLocation>
</comment>
<comment type="similarity">
    <text evidence="4">Belongs to the phospholipase D family.</text>
</comment>
<keyword id="KW-0378">Hydrolase</keyword>
<keyword id="KW-0442">Lipid degradation</keyword>
<keyword id="KW-0443">Lipid metabolism</keyword>
<keyword id="KW-0964">Secreted</keyword>
<keyword id="KW-0732">Signal</keyword>
<keyword id="KW-0843">Virulence</keyword>
<gene>
    <name type="primary">pld</name>
    <name type="synonym">pldA</name>
    <name type="ordered locus">RBE_0175</name>
</gene>